<gene>
    <name evidence="1" type="primary">serS</name>
    <name type="ordered locus">SCH_0917</name>
</gene>
<accession>Q57R38</accession>
<reference key="1">
    <citation type="journal article" date="2005" name="Nucleic Acids Res.">
        <title>The genome sequence of Salmonella enterica serovar Choleraesuis, a highly invasive and resistant zoonotic pathogen.</title>
        <authorList>
            <person name="Chiu C.-H."/>
            <person name="Tang P."/>
            <person name="Chu C."/>
            <person name="Hu S."/>
            <person name="Bao Q."/>
            <person name="Yu J."/>
            <person name="Chou Y.-Y."/>
            <person name="Wang H.-S."/>
            <person name="Lee Y.-S."/>
        </authorList>
    </citation>
    <scope>NUCLEOTIDE SEQUENCE [LARGE SCALE GENOMIC DNA]</scope>
    <source>
        <strain>SC-B67</strain>
    </source>
</reference>
<protein>
    <recommendedName>
        <fullName evidence="1">Serine--tRNA ligase</fullName>
        <ecNumber evidence="1">6.1.1.11</ecNumber>
    </recommendedName>
    <alternativeName>
        <fullName evidence="1">Seryl-tRNA synthetase</fullName>
        <shortName evidence="1">SerRS</shortName>
    </alternativeName>
    <alternativeName>
        <fullName evidence="1">Seryl-tRNA(Ser/Sec) synthetase</fullName>
    </alternativeName>
</protein>
<proteinExistence type="inferred from homology"/>
<evidence type="ECO:0000255" key="1">
    <source>
        <dbReference type="HAMAP-Rule" id="MF_00176"/>
    </source>
</evidence>
<keyword id="KW-0030">Aminoacyl-tRNA synthetase</keyword>
<keyword id="KW-0067">ATP-binding</keyword>
<keyword id="KW-0963">Cytoplasm</keyword>
<keyword id="KW-0436">Ligase</keyword>
<keyword id="KW-0547">Nucleotide-binding</keyword>
<keyword id="KW-0648">Protein biosynthesis</keyword>
<feature type="chain" id="PRO_1000019806" description="Serine--tRNA ligase">
    <location>
        <begin position="1"/>
        <end position="430"/>
    </location>
</feature>
<feature type="binding site" evidence="1">
    <location>
        <begin position="237"/>
        <end position="239"/>
    </location>
    <ligand>
        <name>L-serine</name>
        <dbReference type="ChEBI" id="CHEBI:33384"/>
    </ligand>
</feature>
<feature type="binding site" evidence="1">
    <location>
        <begin position="268"/>
        <end position="270"/>
    </location>
    <ligand>
        <name>ATP</name>
        <dbReference type="ChEBI" id="CHEBI:30616"/>
    </ligand>
</feature>
<feature type="binding site" evidence="1">
    <location>
        <position position="291"/>
    </location>
    <ligand>
        <name>L-serine</name>
        <dbReference type="ChEBI" id="CHEBI:33384"/>
    </ligand>
</feature>
<feature type="binding site" evidence="1">
    <location>
        <begin position="355"/>
        <end position="358"/>
    </location>
    <ligand>
        <name>ATP</name>
        <dbReference type="ChEBI" id="CHEBI:30616"/>
    </ligand>
</feature>
<feature type="binding site" evidence="1">
    <location>
        <position position="391"/>
    </location>
    <ligand>
        <name>L-serine</name>
        <dbReference type="ChEBI" id="CHEBI:33384"/>
    </ligand>
</feature>
<dbReference type="EC" id="6.1.1.11" evidence="1"/>
<dbReference type="EMBL" id="AE017220">
    <property type="protein sequence ID" value="AAX64823.1"/>
    <property type="molecule type" value="Genomic_DNA"/>
</dbReference>
<dbReference type="RefSeq" id="WP_000886697.1">
    <property type="nucleotide sequence ID" value="NC_006905.1"/>
</dbReference>
<dbReference type="SMR" id="Q57R38"/>
<dbReference type="KEGG" id="sec:SCH_0917"/>
<dbReference type="HOGENOM" id="CLU_023797_1_1_6"/>
<dbReference type="UniPathway" id="UPA00906">
    <property type="reaction ID" value="UER00895"/>
</dbReference>
<dbReference type="Proteomes" id="UP000000538">
    <property type="component" value="Chromosome"/>
</dbReference>
<dbReference type="GO" id="GO:0005737">
    <property type="term" value="C:cytoplasm"/>
    <property type="evidence" value="ECO:0007669"/>
    <property type="project" value="UniProtKB-SubCell"/>
</dbReference>
<dbReference type="GO" id="GO:0005524">
    <property type="term" value="F:ATP binding"/>
    <property type="evidence" value="ECO:0007669"/>
    <property type="project" value="UniProtKB-UniRule"/>
</dbReference>
<dbReference type="GO" id="GO:0004828">
    <property type="term" value="F:serine-tRNA ligase activity"/>
    <property type="evidence" value="ECO:0007669"/>
    <property type="project" value="UniProtKB-UniRule"/>
</dbReference>
<dbReference type="GO" id="GO:0016260">
    <property type="term" value="P:selenocysteine biosynthetic process"/>
    <property type="evidence" value="ECO:0007669"/>
    <property type="project" value="UniProtKB-UniRule"/>
</dbReference>
<dbReference type="GO" id="GO:0006434">
    <property type="term" value="P:seryl-tRNA aminoacylation"/>
    <property type="evidence" value="ECO:0007669"/>
    <property type="project" value="UniProtKB-UniRule"/>
</dbReference>
<dbReference type="CDD" id="cd00770">
    <property type="entry name" value="SerRS_core"/>
    <property type="match status" value="1"/>
</dbReference>
<dbReference type="FunFam" id="1.10.287.40:FF:000001">
    <property type="entry name" value="Serine--tRNA ligase"/>
    <property type="match status" value="1"/>
</dbReference>
<dbReference type="FunFam" id="3.30.930.10:FF:000018">
    <property type="entry name" value="Serine--tRNA ligase"/>
    <property type="match status" value="1"/>
</dbReference>
<dbReference type="Gene3D" id="3.30.930.10">
    <property type="entry name" value="Bira Bifunctional Protein, Domain 2"/>
    <property type="match status" value="1"/>
</dbReference>
<dbReference type="Gene3D" id="1.10.287.40">
    <property type="entry name" value="Serine-tRNA synthetase, tRNA binding domain"/>
    <property type="match status" value="1"/>
</dbReference>
<dbReference type="HAMAP" id="MF_00176">
    <property type="entry name" value="Ser_tRNA_synth_type1"/>
    <property type="match status" value="1"/>
</dbReference>
<dbReference type="InterPro" id="IPR002314">
    <property type="entry name" value="aa-tRNA-synt_IIb"/>
</dbReference>
<dbReference type="InterPro" id="IPR006195">
    <property type="entry name" value="aa-tRNA-synth_II"/>
</dbReference>
<dbReference type="InterPro" id="IPR045864">
    <property type="entry name" value="aa-tRNA-synth_II/BPL/LPL"/>
</dbReference>
<dbReference type="InterPro" id="IPR002317">
    <property type="entry name" value="Ser-tRNA-ligase_type_1"/>
</dbReference>
<dbReference type="InterPro" id="IPR015866">
    <property type="entry name" value="Ser-tRNA-synth_1_N"/>
</dbReference>
<dbReference type="InterPro" id="IPR042103">
    <property type="entry name" value="SerRS_1_N_sf"/>
</dbReference>
<dbReference type="InterPro" id="IPR033729">
    <property type="entry name" value="SerRS_core"/>
</dbReference>
<dbReference type="InterPro" id="IPR010978">
    <property type="entry name" value="tRNA-bd_arm"/>
</dbReference>
<dbReference type="NCBIfam" id="TIGR00414">
    <property type="entry name" value="serS"/>
    <property type="match status" value="1"/>
</dbReference>
<dbReference type="PANTHER" id="PTHR43697:SF1">
    <property type="entry name" value="SERINE--TRNA LIGASE"/>
    <property type="match status" value="1"/>
</dbReference>
<dbReference type="PANTHER" id="PTHR43697">
    <property type="entry name" value="SERYL-TRNA SYNTHETASE"/>
    <property type="match status" value="1"/>
</dbReference>
<dbReference type="Pfam" id="PF02403">
    <property type="entry name" value="Seryl_tRNA_N"/>
    <property type="match status" value="1"/>
</dbReference>
<dbReference type="Pfam" id="PF00587">
    <property type="entry name" value="tRNA-synt_2b"/>
    <property type="match status" value="1"/>
</dbReference>
<dbReference type="PIRSF" id="PIRSF001529">
    <property type="entry name" value="Ser-tRNA-synth_IIa"/>
    <property type="match status" value="1"/>
</dbReference>
<dbReference type="PRINTS" id="PR00981">
    <property type="entry name" value="TRNASYNTHSER"/>
</dbReference>
<dbReference type="SUPFAM" id="SSF55681">
    <property type="entry name" value="Class II aaRS and biotin synthetases"/>
    <property type="match status" value="1"/>
</dbReference>
<dbReference type="SUPFAM" id="SSF46589">
    <property type="entry name" value="tRNA-binding arm"/>
    <property type="match status" value="1"/>
</dbReference>
<dbReference type="PROSITE" id="PS50862">
    <property type="entry name" value="AA_TRNA_LIGASE_II"/>
    <property type="match status" value="1"/>
</dbReference>
<organism>
    <name type="scientific">Salmonella choleraesuis (strain SC-B67)</name>
    <dbReference type="NCBI Taxonomy" id="321314"/>
    <lineage>
        <taxon>Bacteria</taxon>
        <taxon>Pseudomonadati</taxon>
        <taxon>Pseudomonadota</taxon>
        <taxon>Gammaproteobacteria</taxon>
        <taxon>Enterobacterales</taxon>
        <taxon>Enterobacteriaceae</taxon>
        <taxon>Salmonella</taxon>
    </lineage>
</organism>
<sequence>MLDPNLLRNEPDAVAEKLARRGFKLDVDKLRALEERRKVLQVNTENLQAERNSRSKSIGQAKARGEDIEPLRLEVNKLGEELDAAKAELDTLLAEIRDIALTIPNLPADEVPVGKDENDNVEVSRWGTPREFDFEIRDHVTLGEMHSGLDFAAAVKLTGSRFVVMKGQIARMHRALSQFMLDLHTEQHGYSENYVPYLVNHDTLYGTGQLPKFAGDLFHTRPLEEEADSSNYALIPTAEVPLTNLVRDEIIDEDQLPIKMTAHTPCFRSEAGSYGRDTRGLIRMHQFDKVEMVQIVRPEDSMAALEEMTGHAEKVLQLLGLPYRKIILCTGDMGFGACKTYDLEVWVPAQNTYREISSCSNVWDFQARRMQARCRSKSDKKTRLVHTLNGSGLAVGRTLVAVMENYQQADGRIEVPEVLRPYMNGLEYIG</sequence>
<comment type="function">
    <text evidence="1">Catalyzes the attachment of serine to tRNA(Ser). Is also able to aminoacylate tRNA(Sec) with serine, to form the misacylated tRNA L-seryl-tRNA(Sec), which will be further converted into selenocysteinyl-tRNA(Sec).</text>
</comment>
<comment type="catalytic activity">
    <reaction evidence="1">
        <text>tRNA(Ser) + L-serine + ATP = L-seryl-tRNA(Ser) + AMP + diphosphate + H(+)</text>
        <dbReference type="Rhea" id="RHEA:12292"/>
        <dbReference type="Rhea" id="RHEA-COMP:9669"/>
        <dbReference type="Rhea" id="RHEA-COMP:9703"/>
        <dbReference type="ChEBI" id="CHEBI:15378"/>
        <dbReference type="ChEBI" id="CHEBI:30616"/>
        <dbReference type="ChEBI" id="CHEBI:33019"/>
        <dbReference type="ChEBI" id="CHEBI:33384"/>
        <dbReference type="ChEBI" id="CHEBI:78442"/>
        <dbReference type="ChEBI" id="CHEBI:78533"/>
        <dbReference type="ChEBI" id="CHEBI:456215"/>
        <dbReference type="EC" id="6.1.1.11"/>
    </reaction>
</comment>
<comment type="catalytic activity">
    <reaction evidence="1">
        <text>tRNA(Sec) + L-serine + ATP = L-seryl-tRNA(Sec) + AMP + diphosphate + H(+)</text>
        <dbReference type="Rhea" id="RHEA:42580"/>
        <dbReference type="Rhea" id="RHEA-COMP:9742"/>
        <dbReference type="Rhea" id="RHEA-COMP:10128"/>
        <dbReference type="ChEBI" id="CHEBI:15378"/>
        <dbReference type="ChEBI" id="CHEBI:30616"/>
        <dbReference type="ChEBI" id="CHEBI:33019"/>
        <dbReference type="ChEBI" id="CHEBI:33384"/>
        <dbReference type="ChEBI" id="CHEBI:78442"/>
        <dbReference type="ChEBI" id="CHEBI:78533"/>
        <dbReference type="ChEBI" id="CHEBI:456215"/>
        <dbReference type="EC" id="6.1.1.11"/>
    </reaction>
</comment>
<comment type="pathway">
    <text evidence="1">Aminoacyl-tRNA biosynthesis; selenocysteinyl-tRNA(Sec) biosynthesis; L-seryl-tRNA(Sec) from L-serine and tRNA(Sec): step 1/1.</text>
</comment>
<comment type="subunit">
    <text evidence="1">Homodimer. The tRNA molecule binds across the dimer.</text>
</comment>
<comment type="subcellular location">
    <subcellularLocation>
        <location evidence="1">Cytoplasm</location>
    </subcellularLocation>
</comment>
<comment type="domain">
    <text evidence="1">Consists of two distinct domains, a catalytic core and a N-terminal extension that is involved in tRNA binding.</text>
</comment>
<comment type="similarity">
    <text evidence="1">Belongs to the class-II aminoacyl-tRNA synthetase family. Type-1 seryl-tRNA synthetase subfamily.</text>
</comment>
<name>SYS_SALCH</name>